<organism>
    <name type="scientific">Clostridium botulinum (strain Loch Maree / Type A3)</name>
    <dbReference type="NCBI Taxonomy" id="498214"/>
    <lineage>
        <taxon>Bacteria</taxon>
        <taxon>Bacillati</taxon>
        <taxon>Bacillota</taxon>
        <taxon>Clostridia</taxon>
        <taxon>Eubacteriales</taxon>
        <taxon>Clostridiaceae</taxon>
        <taxon>Clostridium</taxon>
    </lineage>
</organism>
<sequence length="95" mass="10923">MQITDVRVRKIAAEGKMKAIVSVTFDNEFVVHDIKVIEGQNGLFIAMPSRKTPDGEYKDIAHPINTETREKIQKSIIEEYERAKMEEESSEKVQE</sequence>
<gene>
    <name evidence="1" type="primary">spoVG</name>
    <name type="ordered locus">CLK_3015</name>
</gene>
<protein>
    <recommendedName>
        <fullName evidence="1">Putative septation protein SpoVG</fullName>
    </recommendedName>
</protein>
<dbReference type="EMBL" id="CP000962">
    <property type="protein sequence ID" value="ACA55692.1"/>
    <property type="molecule type" value="Genomic_DNA"/>
</dbReference>
<dbReference type="RefSeq" id="WP_003359319.1">
    <property type="nucleotide sequence ID" value="NC_010520.1"/>
</dbReference>
<dbReference type="SMR" id="B1KTE8"/>
<dbReference type="GeneID" id="92940335"/>
<dbReference type="KEGG" id="cbl:CLK_3015"/>
<dbReference type="HOGENOM" id="CLU_103669_2_1_9"/>
<dbReference type="GO" id="GO:0000917">
    <property type="term" value="P:division septum assembly"/>
    <property type="evidence" value="ECO:0007669"/>
    <property type="project" value="UniProtKB-KW"/>
</dbReference>
<dbReference type="GO" id="GO:0030435">
    <property type="term" value="P:sporulation resulting in formation of a cellular spore"/>
    <property type="evidence" value="ECO:0007669"/>
    <property type="project" value="InterPro"/>
</dbReference>
<dbReference type="Gene3D" id="3.30.1120.40">
    <property type="entry name" value="Stage V sporulation protein G"/>
    <property type="match status" value="1"/>
</dbReference>
<dbReference type="HAMAP" id="MF_00819">
    <property type="entry name" value="SpoVG"/>
    <property type="match status" value="1"/>
</dbReference>
<dbReference type="InterPro" id="IPR007170">
    <property type="entry name" value="SpoVG"/>
</dbReference>
<dbReference type="InterPro" id="IPR036751">
    <property type="entry name" value="SpoVG_sf"/>
</dbReference>
<dbReference type="NCBIfam" id="NF009749">
    <property type="entry name" value="PRK13259.1"/>
    <property type="match status" value="1"/>
</dbReference>
<dbReference type="PANTHER" id="PTHR38429">
    <property type="entry name" value="SEPTATION PROTEIN SPOVG-RELATED"/>
    <property type="match status" value="1"/>
</dbReference>
<dbReference type="PANTHER" id="PTHR38429:SF1">
    <property type="entry name" value="SEPTATION PROTEIN SPOVG-RELATED"/>
    <property type="match status" value="1"/>
</dbReference>
<dbReference type="Pfam" id="PF04026">
    <property type="entry name" value="SpoVG"/>
    <property type="match status" value="1"/>
</dbReference>
<dbReference type="SUPFAM" id="SSF160537">
    <property type="entry name" value="SpoVG-like"/>
    <property type="match status" value="1"/>
</dbReference>
<keyword id="KW-0131">Cell cycle</keyword>
<keyword id="KW-0132">Cell division</keyword>
<keyword id="KW-0717">Septation</keyword>
<accession>B1KTE8</accession>
<reference key="1">
    <citation type="journal article" date="2007" name="PLoS ONE">
        <title>Analysis of the neurotoxin complex genes in Clostridium botulinum A1-A4 and B1 strains: BoNT/A3, /Ba4 and /B1 clusters are located within plasmids.</title>
        <authorList>
            <person name="Smith T.J."/>
            <person name="Hill K.K."/>
            <person name="Foley B.T."/>
            <person name="Detter J.C."/>
            <person name="Munk A.C."/>
            <person name="Bruce D.C."/>
            <person name="Doggett N.A."/>
            <person name="Smith L.A."/>
            <person name="Marks J.D."/>
            <person name="Xie G."/>
            <person name="Brettin T.S."/>
        </authorList>
    </citation>
    <scope>NUCLEOTIDE SEQUENCE [LARGE SCALE GENOMIC DNA]</scope>
    <source>
        <strain>Loch Maree / Type A3</strain>
    </source>
</reference>
<evidence type="ECO:0000255" key="1">
    <source>
        <dbReference type="HAMAP-Rule" id="MF_00819"/>
    </source>
</evidence>
<proteinExistence type="inferred from homology"/>
<comment type="function">
    <text evidence="1">Could be involved in septation.</text>
</comment>
<comment type="similarity">
    <text evidence="1">Belongs to the SpoVG family.</text>
</comment>
<name>SP5G_CLOBM</name>
<feature type="chain" id="PRO_1000196498" description="Putative septation protein SpoVG">
    <location>
        <begin position="1"/>
        <end position="95"/>
    </location>
</feature>